<sequence>MNLRPLHDRVIVKRLDNETKTASGIVIPDNAAEKPDQGEVLAIGPGKKDDKGNNIALDVKVGDRVLFGKYAGQGVKVDGQELLVMREEDIMAVVNK</sequence>
<keyword id="KW-0143">Chaperone</keyword>
<keyword id="KW-0963">Cytoplasm</keyword>
<reference key="1">
    <citation type="journal article" date="2010" name="PLoS ONE">
        <title>The complete multipartite genome sequence of Cupriavidus necator JMP134, a versatile pollutant degrader.</title>
        <authorList>
            <person name="Lykidis A."/>
            <person name="Perez-Pantoja D."/>
            <person name="Ledger T."/>
            <person name="Mavromatis K."/>
            <person name="Anderson I.J."/>
            <person name="Ivanova N.N."/>
            <person name="Hooper S.D."/>
            <person name="Lapidus A."/>
            <person name="Lucas S."/>
            <person name="Gonzalez B."/>
            <person name="Kyrpides N.C."/>
        </authorList>
    </citation>
    <scope>NUCLEOTIDE SEQUENCE [LARGE SCALE GENOMIC DNA]</scope>
    <source>
        <strain>JMP134 / LMG 1197</strain>
    </source>
</reference>
<accession>Q46XW5</accession>
<name>CH10_CUPPJ</name>
<proteinExistence type="inferred from homology"/>
<dbReference type="EMBL" id="CP000090">
    <property type="protein sequence ID" value="AAZ62018.1"/>
    <property type="molecule type" value="Genomic_DNA"/>
</dbReference>
<dbReference type="SMR" id="Q46XW5"/>
<dbReference type="STRING" id="264198.Reut_A2657"/>
<dbReference type="KEGG" id="reu:Reut_A2657"/>
<dbReference type="eggNOG" id="COG0234">
    <property type="taxonomic scope" value="Bacteria"/>
</dbReference>
<dbReference type="HOGENOM" id="CLU_132825_1_0_4"/>
<dbReference type="OrthoDB" id="9806791at2"/>
<dbReference type="GO" id="GO:0005737">
    <property type="term" value="C:cytoplasm"/>
    <property type="evidence" value="ECO:0007669"/>
    <property type="project" value="UniProtKB-SubCell"/>
</dbReference>
<dbReference type="GO" id="GO:0005524">
    <property type="term" value="F:ATP binding"/>
    <property type="evidence" value="ECO:0007669"/>
    <property type="project" value="InterPro"/>
</dbReference>
<dbReference type="GO" id="GO:0046872">
    <property type="term" value="F:metal ion binding"/>
    <property type="evidence" value="ECO:0007669"/>
    <property type="project" value="TreeGrafter"/>
</dbReference>
<dbReference type="GO" id="GO:0044183">
    <property type="term" value="F:protein folding chaperone"/>
    <property type="evidence" value="ECO:0007669"/>
    <property type="project" value="InterPro"/>
</dbReference>
<dbReference type="GO" id="GO:0051087">
    <property type="term" value="F:protein-folding chaperone binding"/>
    <property type="evidence" value="ECO:0007669"/>
    <property type="project" value="TreeGrafter"/>
</dbReference>
<dbReference type="GO" id="GO:0051082">
    <property type="term" value="F:unfolded protein binding"/>
    <property type="evidence" value="ECO:0007669"/>
    <property type="project" value="TreeGrafter"/>
</dbReference>
<dbReference type="GO" id="GO:0051085">
    <property type="term" value="P:chaperone cofactor-dependent protein refolding"/>
    <property type="evidence" value="ECO:0007669"/>
    <property type="project" value="TreeGrafter"/>
</dbReference>
<dbReference type="CDD" id="cd00320">
    <property type="entry name" value="cpn10"/>
    <property type="match status" value="1"/>
</dbReference>
<dbReference type="FunFam" id="2.30.33.40:FF:000001">
    <property type="entry name" value="10 kDa chaperonin"/>
    <property type="match status" value="1"/>
</dbReference>
<dbReference type="Gene3D" id="2.30.33.40">
    <property type="entry name" value="GroES chaperonin"/>
    <property type="match status" value="1"/>
</dbReference>
<dbReference type="HAMAP" id="MF_00580">
    <property type="entry name" value="CH10"/>
    <property type="match status" value="1"/>
</dbReference>
<dbReference type="InterPro" id="IPR020818">
    <property type="entry name" value="Chaperonin_GroES"/>
</dbReference>
<dbReference type="InterPro" id="IPR037124">
    <property type="entry name" value="Chaperonin_GroES_sf"/>
</dbReference>
<dbReference type="InterPro" id="IPR018369">
    <property type="entry name" value="Chaprnonin_Cpn10_CS"/>
</dbReference>
<dbReference type="InterPro" id="IPR011032">
    <property type="entry name" value="GroES-like_sf"/>
</dbReference>
<dbReference type="NCBIfam" id="NF001527">
    <property type="entry name" value="PRK00364.1-2"/>
    <property type="match status" value="1"/>
</dbReference>
<dbReference type="NCBIfam" id="NF001529">
    <property type="entry name" value="PRK00364.1-5"/>
    <property type="match status" value="1"/>
</dbReference>
<dbReference type="NCBIfam" id="NF001531">
    <property type="entry name" value="PRK00364.2-2"/>
    <property type="match status" value="1"/>
</dbReference>
<dbReference type="NCBIfam" id="NF001533">
    <property type="entry name" value="PRK00364.2-4"/>
    <property type="match status" value="1"/>
</dbReference>
<dbReference type="NCBIfam" id="NF001534">
    <property type="entry name" value="PRK00364.2-5"/>
    <property type="match status" value="1"/>
</dbReference>
<dbReference type="PANTHER" id="PTHR10772">
    <property type="entry name" value="10 KDA HEAT SHOCK PROTEIN"/>
    <property type="match status" value="1"/>
</dbReference>
<dbReference type="PANTHER" id="PTHR10772:SF58">
    <property type="entry name" value="CO-CHAPERONIN GROES"/>
    <property type="match status" value="1"/>
</dbReference>
<dbReference type="Pfam" id="PF00166">
    <property type="entry name" value="Cpn10"/>
    <property type="match status" value="1"/>
</dbReference>
<dbReference type="PRINTS" id="PR00297">
    <property type="entry name" value="CHAPERONIN10"/>
</dbReference>
<dbReference type="SMART" id="SM00883">
    <property type="entry name" value="Cpn10"/>
    <property type="match status" value="1"/>
</dbReference>
<dbReference type="SUPFAM" id="SSF50129">
    <property type="entry name" value="GroES-like"/>
    <property type="match status" value="1"/>
</dbReference>
<dbReference type="PROSITE" id="PS00681">
    <property type="entry name" value="CHAPERONINS_CPN10"/>
    <property type="match status" value="1"/>
</dbReference>
<gene>
    <name evidence="1" type="primary">groES</name>
    <name evidence="1" type="synonym">groS</name>
    <name type="ordered locus">Reut_A2657</name>
</gene>
<protein>
    <recommendedName>
        <fullName evidence="1">Co-chaperonin GroES</fullName>
    </recommendedName>
    <alternativeName>
        <fullName evidence="1">10 kDa chaperonin</fullName>
    </alternativeName>
    <alternativeName>
        <fullName evidence="1">Chaperonin-10</fullName>
        <shortName evidence="1">Cpn10</shortName>
    </alternativeName>
</protein>
<feature type="chain" id="PRO_1000025345" description="Co-chaperonin GroES">
    <location>
        <begin position="1"/>
        <end position="96"/>
    </location>
</feature>
<organism>
    <name type="scientific">Cupriavidus pinatubonensis (strain JMP 134 / LMG 1197)</name>
    <name type="common">Cupriavidus necator (strain JMP 134)</name>
    <dbReference type="NCBI Taxonomy" id="264198"/>
    <lineage>
        <taxon>Bacteria</taxon>
        <taxon>Pseudomonadati</taxon>
        <taxon>Pseudomonadota</taxon>
        <taxon>Betaproteobacteria</taxon>
        <taxon>Burkholderiales</taxon>
        <taxon>Burkholderiaceae</taxon>
        <taxon>Cupriavidus</taxon>
    </lineage>
</organism>
<evidence type="ECO:0000255" key="1">
    <source>
        <dbReference type="HAMAP-Rule" id="MF_00580"/>
    </source>
</evidence>
<comment type="function">
    <text evidence="1">Together with the chaperonin GroEL, plays an essential role in assisting protein folding. The GroEL-GroES system forms a nano-cage that allows encapsulation of the non-native substrate proteins and provides a physical environment optimized to promote and accelerate protein folding. GroES binds to the apical surface of the GroEL ring, thereby capping the opening of the GroEL channel.</text>
</comment>
<comment type="subunit">
    <text evidence="1">Heptamer of 7 subunits arranged in a ring. Interacts with the chaperonin GroEL.</text>
</comment>
<comment type="subcellular location">
    <subcellularLocation>
        <location evidence="1">Cytoplasm</location>
    </subcellularLocation>
</comment>
<comment type="similarity">
    <text evidence="1">Belongs to the GroES chaperonin family.</text>
</comment>